<keyword id="KW-0472">Membrane</keyword>
<keyword id="KW-0571">Peptide transport</keyword>
<keyword id="KW-0653">Protein transport</keyword>
<keyword id="KW-1185">Reference proteome</keyword>
<keyword id="KW-0812">Transmembrane</keyword>
<keyword id="KW-1133">Transmembrane helix</keyword>
<keyword id="KW-0813">Transport</keyword>
<reference key="1">
    <citation type="journal article" date="1999" name="Nature">
        <title>Sequence and analysis of chromosome 4 of the plant Arabidopsis thaliana.</title>
        <authorList>
            <person name="Mayer K.F.X."/>
            <person name="Schueller C."/>
            <person name="Wambutt R."/>
            <person name="Murphy G."/>
            <person name="Volckaert G."/>
            <person name="Pohl T."/>
            <person name="Duesterhoeft A."/>
            <person name="Stiekema W."/>
            <person name="Entian K.-D."/>
            <person name="Terryn N."/>
            <person name="Harris B."/>
            <person name="Ansorge W."/>
            <person name="Brandt P."/>
            <person name="Grivell L.A."/>
            <person name="Rieger M."/>
            <person name="Weichselgartner M."/>
            <person name="de Simone V."/>
            <person name="Obermaier B."/>
            <person name="Mache R."/>
            <person name="Mueller M."/>
            <person name="Kreis M."/>
            <person name="Delseny M."/>
            <person name="Puigdomenech P."/>
            <person name="Watson M."/>
            <person name="Schmidtheini T."/>
            <person name="Reichert B."/>
            <person name="Portetelle D."/>
            <person name="Perez-Alonso M."/>
            <person name="Boutry M."/>
            <person name="Bancroft I."/>
            <person name="Vos P."/>
            <person name="Hoheisel J."/>
            <person name="Zimmermann W."/>
            <person name="Wedler H."/>
            <person name="Ridley P."/>
            <person name="Langham S.-A."/>
            <person name="McCullagh B."/>
            <person name="Bilham L."/>
            <person name="Robben J."/>
            <person name="van der Schueren J."/>
            <person name="Grymonprez B."/>
            <person name="Chuang Y.-J."/>
            <person name="Vandenbussche F."/>
            <person name="Braeken M."/>
            <person name="Weltjens I."/>
            <person name="Voet M."/>
            <person name="Bastiaens I."/>
            <person name="Aert R."/>
            <person name="Defoor E."/>
            <person name="Weitzenegger T."/>
            <person name="Bothe G."/>
            <person name="Ramsperger U."/>
            <person name="Hilbert H."/>
            <person name="Braun M."/>
            <person name="Holzer E."/>
            <person name="Brandt A."/>
            <person name="Peters S."/>
            <person name="van Staveren M."/>
            <person name="Dirkse W."/>
            <person name="Mooijman P."/>
            <person name="Klein Lankhorst R."/>
            <person name="Rose M."/>
            <person name="Hauf J."/>
            <person name="Koetter P."/>
            <person name="Berneiser S."/>
            <person name="Hempel S."/>
            <person name="Feldpausch M."/>
            <person name="Lamberth S."/>
            <person name="Van den Daele H."/>
            <person name="De Keyser A."/>
            <person name="Buysshaert C."/>
            <person name="Gielen J."/>
            <person name="Villarroel R."/>
            <person name="De Clercq R."/>
            <person name="van Montagu M."/>
            <person name="Rogers J."/>
            <person name="Cronin A."/>
            <person name="Quail M.A."/>
            <person name="Bray-Allen S."/>
            <person name="Clark L."/>
            <person name="Doggett J."/>
            <person name="Hall S."/>
            <person name="Kay M."/>
            <person name="Lennard N."/>
            <person name="McLay K."/>
            <person name="Mayes R."/>
            <person name="Pettett A."/>
            <person name="Rajandream M.A."/>
            <person name="Lyne M."/>
            <person name="Benes V."/>
            <person name="Rechmann S."/>
            <person name="Borkova D."/>
            <person name="Bloecker H."/>
            <person name="Scharfe M."/>
            <person name="Grimm M."/>
            <person name="Loehnert T.-H."/>
            <person name="Dose S."/>
            <person name="de Haan M."/>
            <person name="Maarse A.C."/>
            <person name="Schaefer M."/>
            <person name="Mueller-Auer S."/>
            <person name="Gabel C."/>
            <person name="Fuchs M."/>
            <person name="Fartmann B."/>
            <person name="Granderath K."/>
            <person name="Dauner D."/>
            <person name="Herzl A."/>
            <person name="Neumann S."/>
            <person name="Argiriou A."/>
            <person name="Vitale D."/>
            <person name="Liguori R."/>
            <person name="Piravandi E."/>
            <person name="Massenet O."/>
            <person name="Quigley F."/>
            <person name="Clabauld G."/>
            <person name="Muendlein A."/>
            <person name="Felber R."/>
            <person name="Schnabl S."/>
            <person name="Hiller R."/>
            <person name="Schmidt W."/>
            <person name="Lecharny A."/>
            <person name="Aubourg S."/>
            <person name="Chefdor F."/>
            <person name="Cooke R."/>
            <person name="Berger C."/>
            <person name="Monfort A."/>
            <person name="Casacuberta E."/>
            <person name="Gibbons T."/>
            <person name="Weber N."/>
            <person name="Vandenbol M."/>
            <person name="Bargues M."/>
            <person name="Terol J."/>
            <person name="Torres A."/>
            <person name="Perez-Perez A."/>
            <person name="Purnelle B."/>
            <person name="Bent E."/>
            <person name="Johnson S."/>
            <person name="Tacon D."/>
            <person name="Jesse T."/>
            <person name="Heijnen L."/>
            <person name="Schwarz S."/>
            <person name="Scholler P."/>
            <person name="Heber S."/>
            <person name="Francs P."/>
            <person name="Bielke C."/>
            <person name="Frishman D."/>
            <person name="Haase D."/>
            <person name="Lemcke K."/>
            <person name="Mewes H.-W."/>
            <person name="Stocker S."/>
            <person name="Zaccaria P."/>
            <person name="Bevan M."/>
            <person name="Wilson R.K."/>
            <person name="de la Bastide M."/>
            <person name="Habermann K."/>
            <person name="Parnell L."/>
            <person name="Dedhia N."/>
            <person name="Gnoj L."/>
            <person name="Schutz K."/>
            <person name="Huang E."/>
            <person name="Spiegel L."/>
            <person name="Sekhon M."/>
            <person name="Murray J."/>
            <person name="Sheet P."/>
            <person name="Cordes M."/>
            <person name="Abu-Threideh J."/>
            <person name="Stoneking T."/>
            <person name="Kalicki J."/>
            <person name="Graves T."/>
            <person name="Harmon G."/>
            <person name="Edwards J."/>
            <person name="Latreille P."/>
            <person name="Courtney L."/>
            <person name="Cloud J."/>
            <person name="Abbott A."/>
            <person name="Scott K."/>
            <person name="Johnson D."/>
            <person name="Minx P."/>
            <person name="Bentley D."/>
            <person name="Fulton B."/>
            <person name="Miller N."/>
            <person name="Greco T."/>
            <person name="Kemp K."/>
            <person name="Kramer J."/>
            <person name="Fulton L."/>
            <person name="Mardis E."/>
            <person name="Dante M."/>
            <person name="Pepin K."/>
            <person name="Hillier L.W."/>
            <person name="Nelson J."/>
            <person name="Spieth J."/>
            <person name="Ryan E."/>
            <person name="Andrews S."/>
            <person name="Geisel C."/>
            <person name="Layman D."/>
            <person name="Du H."/>
            <person name="Ali J."/>
            <person name="Berghoff A."/>
            <person name="Jones K."/>
            <person name="Drone K."/>
            <person name="Cotton M."/>
            <person name="Joshu C."/>
            <person name="Antonoiu B."/>
            <person name="Zidanic M."/>
            <person name="Strong C."/>
            <person name="Sun H."/>
            <person name="Lamar B."/>
            <person name="Yordan C."/>
            <person name="Ma P."/>
            <person name="Zhong J."/>
            <person name="Preston R."/>
            <person name="Vil D."/>
            <person name="Shekher M."/>
            <person name="Matero A."/>
            <person name="Shah R."/>
            <person name="Swaby I.K."/>
            <person name="O'Shaughnessy A."/>
            <person name="Rodriguez M."/>
            <person name="Hoffman J."/>
            <person name="Till S."/>
            <person name="Granat S."/>
            <person name="Shohdy N."/>
            <person name="Hasegawa A."/>
            <person name="Hameed A."/>
            <person name="Lodhi M."/>
            <person name="Johnson A."/>
            <person name="Chen E."/>
            <person name="Marra M.A."/>
            <person name="Martienssen R."/>
            <person name="McCombie W.R."/>
        </authorList>
    </citation>
    <scope>NUCLEOTIDE SEQUENCE [LARGE SCALE GENOMIC DNA]</scope>
    <source>
        <strain>cv. Columbia</strain>
    </source>
</reference>
<reference key="2">
    <citation type="journal article" date="2017" name="Plant J.">
        <title>Araport11: a complete reannotation of the Arabidopsis thaliana reference genome.</title>
        <authorList>
            <person name="Cheng C.Y."/>
            <person name="Krishnakumar V."/>
            <person name="Chan A.P."/>
            <person name="Thibaud-Nissen F."/>
            <person name="Schobel S."/>
            <person name="Town C.D."/>
        </authorList>
    </citation>
    <scope>GENOME REANNOTATION</scope>
    <source>
        <strain>cv. Columbia</strain>
    </source>
</reference>
<reference key="3">
    <citation type="journal article" date="2003" name="Science">
        <title>Empirical analysis of transcriptional activity in the Arabidopsis genome.</title>
        <authorList>
            <person name="Yamada K."/>
            <person name="Lim J."/>
            <person name="Dale J.M."/>
            <person name="Chen H."/>
            <person name="Shinn P."/>
            <person name="Palm C.J."/>
            <person name="Southwick A.M."/>
            <person name="Wu H.C."/>
            <person name="Kim C.J."/>
            <person name="Nguyen M."/>
            <person name="Pham P.K."/>
            <person name="Cheuk R.F."/>
            <person name="Karlin-Newmann G."/>
            <person name="Liu S.X."/>
            <person name="Lam B."/>
            <person name="Sakano H."/>
            <person name="Wu T."/>
            <person name="Yu G."/>
            <person name="Miranda M."/>
            <person name="Quach H.L."/>
            <person name="Tripp M."/>
            <person name="Chang C.H."/>
            <person name="Lee J.M."/>
            <person name="Toriumi M.J."/>
            <person name="Chan M.M."/>
            <person name="Tang C.C."/>
            <person name="Onodera C.S."/>
            <person name="Deng J.M."/>
            <person name="Akiyama K."/>
            <person name="Ansari Y."/>
            <person name="Arakawa T."/>
            <person name="Banh J."/>
            <person name="Banno F."/>
            <person name="Bowser L."/>
            <person name="Brooks S.Y."/>
            <person name="Carninci P."/>
            <person name="Chao Q."/>
            <person name="Choy N."/>
            <person name="Enju A."/>
            <person name="Goldsmith A.D."/>
            <person name="Gurjal M."/>
            <person name="Hansen N.F."/>
            <person name="Hayashizaki Y."/>
            <person name="Johnson-Hopson C."/>
            <person name="Hsuan V.W."/>
            <person name="Iida K."/>
            <person name="Karnes M."/>
            <person name="Khan S."/>
            <person name="Koesema E."/>
            <person name="Ishida J."/>
            <person name="Jiang P.X."/>
            <person name="Jones T."/>
            <person name="Kawai J."/>
            <person name="Kamiya A."/>
            <person name="Meyers C."/>
            <person name="Nakajima M."/>
            <person name="Narusaka M."/>
            <person name="Seki M."/>
            <person name="Sakurai T."/>
            <person name="Satou M."/>
            <person name="Tamse R."/>
            <person name="Vaysberg M."/>
            <person name="Wallender E.K."/>
            <person name="Wong C."/>
            <person name="Yamamura Y."/>
            <person name="Yuan S."/>
            <person name="Shinozaki K."/>
            <person name="Davis R.W."/>
            <person name="Theologis A."/>
            <person name="Ecker J.R."/>
        </authorList>
    </citation>
    <scope>NUCLEOTIDE SEQUENCE [LARGE SCALE MRNA]</scope>
    <source>
        <strain>cv. Columbia</strain>
    </source>
</reference>
<reference key="4">
    <citation type="journal article" date="2002" name="Plant Physiol.">
        <title>An oligopeptide transporter gene family in Arabidopsis.</title>
        <authorList>
            <person name="Koh S."/>
            <person name="Wiles A.M."/>
            <person name="Sharp J.S."/>
            <person name="Naider F.R."/>
            <person name="Becker J.M."/>
            <person name="Stacey G."/>
        </authorList>
    </citation>
    <scope>FUNCTION</scope>
    <scope>NOMENCLATURE</scope>
    <scope>TISSUE SPECIFICITY</scope>
</reference>
<reference key="5">
    <citation type="journal article" date="2004" name="Plant Physiol.">
        <title>AtOPT6 transports glutathione derivatives and is induced by primisulfuron.</title>
        <authorList>
            <person name="Cagnac O."/>
            <person name="Bourbouloux A."/>
            <person name="Chakrabarty D."/>
            <person name="Zhang M.Y."/>
            <person name="Delrot S."/>
        </authorList>
    </citation>
    <scope>FUNCTION</scope>
    <scope>TISSUE SPECIFICITY</scope>
    <scope>DEVELOPMENTAL STAGE</scope>
</reference>
<evidence type="ECO:0000255" key="1"/>
<evidence type="ECO:0000256" key="2">
    <source>
        <dbReference type="SAM" id="MobiDB-lite"/>
    </source>
</evidence>
<evidence type="ECO:0000269" key="3">
    <source>
    </source>
</evidence>
<evidence type="ECO:0000269" key="4">
    <source>
    </source>
</evidence>
<evidence type="ECO:0000305" key="5"/>
<protein>
    <recommendedName>
        <fullName>Oligopeptide transporter 7</fullName>
        <shortName>AtOPT7</shortName>
    </recommendedName>
</protein>
<name>OPT7_ARATH</name>
<organism>
    <name type="scientific">Arabidopsis thaliana</name>
    <name type="common">Mouse-ear cress</name>
    <dbReference type="NCBI Taxonomy" id="3702"/>
    <lineage>
        <taxon>Eukaryota</taxon>
        <taxon>Viridiplantae</taxon>
        <taxon>Streptophyta</taxon>
        <taxon>Embryophyta</taxon>
        <taxon>Tracheophyta</taxon>
        <taxon>Spermatophyta</taxon>
        <taxon>Magnoliopsida</taxon>
        <taxon>eudicotyledons</taxon>
        <taxon>Gunneridae</taxon>
        <taxon>Pentapetalae</taxon>
        <taxon>rosids</taxon>
        <taxon>malvids</taxon>
        <taxon>Brassicales</taxon>
        <taxon>Brassicaceae</taxon>
        <taxon>Camelineae</taxon>
        <taxon>Arabidopsis</taxon>
    </lineage>
</organism>
<dbReference type="EMBL" id="AF080119">
    <property type="protein sequence ID" value="AAC35527.1"/>
    <property type="molecule type" value="Genomic_DNA"/>
</dbReference>
<dbReference type="EMBL" id="AL161518">
    <property type="protein sequence ID" value="CAB81178.1"/>
    <property type="molecule type" value="Genomic_DNA"/>
</dbReference>
<dbReference type="EMBL" id="CP002687">
    <property type="protein sequence ID" value="AEE82927.1"/>
    <property type="molecule type" value="Genomic_DNA"/>
</dbReference>
<dbReference type="EMBL" id="AY045668">
    <property type="protein sequence ID" value="AAK74026.1"/>
    <property type="molecule type" value="mRNA"/>
</dbReference>
<dbReference type="EMBL" id="BT004519">
    <property type="protein sequence ID" value="AAO42765.1"/>
    <property type="molecule type" value="mRNA"/>
</dbReference>
<dbReference type="PIR" id="T01900">
    <property type="entry name" value="T01900"/>
</dbReference>
<dbReference type="RefSeq" id="NP_192815.1">
    <property type="nucleotide sequence ID" value="NM_117145.3"/>
</dbReference>
<dbReference type="FunCoup" id="O82485">
    <property type="interactions" value="141"/>
</dbReference>
<dbReference type="STRING" id="3702.O82485"/>
<dbReference type="PaxDb" id="3702-AT4G10770.1"/>
<dbReference type="ProteomicsDB" id="248821"/>
<dbReference type="EnsemblPlants" id="AT4G10770.1">
    <property type="protein sequence ID" value="AT4G10770.1"/>
    <property type="gene ID" value="AT4G10770"/>
</dbReference>
<dbReference type="GeneID" id="826672"/>
<dbReference type="Gramene" id="AT4G10770.1">
    <property type="protein sequence ID" value="AT4G10770.1"/>
    <property type="gene ID" value="AT4G10770"/>
</dbReference>
<dbReference type="KEGG" id="ath:AT4G10770"/>
<dbReference type="Araport" id="AT4G10770"/>
<dbReference type="TAIR" id="AT4G10770">
    <property type="gene designation" value="OPT7"/>
</dbReference>
<dbReference type="eggNOG" id="KOG2262">
    <property type="taxonomic scope" value="Eukaryota"/>
</dbReference>
<dbReference type="HOGENOM" id="CLU_004965_1_1_1"/>
<dbReference type="InParanoid" id="O82485"/>
<dbReference type="OMA" id="MTFDWAQ"/>
<dbReference type="PhylomeDB" id="O82485"/>
<dbReference type="PRO" id="PR:O82485"/>
<dbReference type="Proteomes" id="UP000006548">
    <property type="component" value="Chromosome 4"/>
</dbReference>
<dbReference type="ExpressionAtlas" id="O82485">
    <property type="expression patterns" value="baseline and differential"/>
</dbReference>
<dbReference type="GO" id="GO:0016020">
    <property type="term" value="C:membrane"/>
    <property type="evidence" value="ECO:0000250"/>
    <property type="project" value="TAIR"/>
</dbReference>
<dbReference type="GO" id="GO:0035673">
    <property type="term" value="F:oligopeptide transmembrane transporter activity"/>
    <property type="evidence" value="ECO:0007669"/>
    <property type="project" value="InterPro"/>
</dbReference>
<dbReference type="GO" id="GO:0015031">
    <property type="term" value="P:protein transport"/>
    <property type="evidence" value="ECO:0007669"/>
    <property type="project" value="UniProtKB-KW"/>
</dbReference>
<dbReference type="InterPro" id="IPR004648">
    <property type="entry name" value="Oligpept_transpt"/>
</dbReference>
<dbReference type="InterPro" id="IPR004813">
    <property type="entry name" value="OPT"/>
</dbReference>
<dbReference type="NCBIfam" id="TIGR00727">
    <property type="entry name" value="ISP4_OPT"/>
    <property type="match status" value="1"/>
</dbReference>
<dbReference type="NCBIfam" id="TIGR00728">
    <property type="entry name" value="OPT_sfam"/>
    <property type="match status" value="1"/>
</dbReference>
<dbReference type="PANTHER" id="PTHR22601">
    <property type="entry name" value="ISP4 LIKE PROTEIN"/>
    <property type="match status" value="1"/>
</dbReference>
<dbReference type="Pfam" id="PF03169">
    <property type="entry name" value="OPT"/>
    <property type="match status" value="1"/>
</dbReference>
<feature type="chain" id="PRO_0000213784" description="Oligopeptide transporter 7">
    <location>
        <begin position="1"/>
        <end position="766"/>
    </location>
</feature>
<feature type="transmembrane region" description="Helical" evidence="1">
    <location>
        <begin position="79"/>
        <end position="99"/>
    </location>
</feature>
<feature type="transmembrane region" description="Helical" evidence="1">
    <location>
        <begin position="104"/>
        <end position="124"/>
    </location>
</feature>
<feature type="transmembrane region" description="Helical" evidence="1">
    <location>
        <begin position="154"/>
        <end position="174"/>
    </location>
</feature>
<feature type="transmembrane region" description="Helical" evidence="1">
    <location>
        <begin position="184"/>
        <end position="204"/>
    </location>
</feature>
<feature type="transmembrane region" description="Helical" evidence="1">
    <location>
        <begin position="247"/>
        <end position="267"/>
    </location>
</feature>
<feature type="transmembrane region" description="Helical" evidence="1">
    <location>
        <begin position="287"/>
        <end position="307"/>
    </location>
</feature>
<feature type="transmembrane region" description="Helical" evidence="1">
    <location>
        <begin position="324"/>
        <end position="344"/>
    </location>
</feature>
<feature type="transmembrane region" description="Helical" evidence="1">
    <location>
        <begin position="390"/>
        <end position="410"/>
    </location>
</feature>
<feature type="transmembrane region" description="Helical" evidence="1">
    <location>
        <begin position="446"/>
        <end position="466"/>
    </location>
</feature>
<feature type="transmembrane region" description="Helical" evidence="1">
    <location>
        <begin position="477"/>
        <end position="497"/>
    </location>
</feature>
<feature type="transmembrane region" description="Helical" evidence="1">
    <location>
        <begin position="509"/>
        <end position="529"/>
    </location>
</feature>
<feature type="transmembrane region" description="Helical" evidence="1">
    <location>
        <begin position="561"/>
        <end position="581"/>
    </location>
</feature>
<feature type="transmembrane region" description="Helical" evidence="1">
    <location>
        <begin position="627"/>
        <end position="647"/>
    </location>
</feature>
<feature type="transmembrane region" description="Helical" evidence="1">
    <location>
        <begin position="676"/>
        <end position="696"/>
    </location>
</feature>
<feature type="transmembrane region" description="Helical" evidence="1">
    <location>
        <begin position="709"/>
        <end position="729"/>
    </location>
</feature>
<feature type="region of interest" description="Disordered" evidence="2">
    <location>
        <begin position="1"/>
        <end position="58"/>
    </location>
</feature>
<feature type="compositionally biased region" description="Acidic residues" evidence="2">
    <location>
        <begin position="45"/>
        <end position="54"/>
    </location>
</feature>
<comment type="function">
    <text evidence="3 4">Involved in the translocation of tetra- and pentapeptides across the cellular membrane in an energy-dependent manner. May also transport cadmium complexes.</text>
</comment>
<comment type="subcellular location">
    <subcellularLocation>
        <location evidence="5">Membrane</location>
        <topology evidence="5">Multi-pass membrane protein</topology>
    </subcellularLocation>
</comment>
<comment type="tissue specificity">
    <text evidence="3 4">Expressed in the major and the first-order veins and in the hydathodes of the leaves. In the roots, expressed in circular zones surrounding lateral root primordia and in some part of the root epidermis. Expressed also in the sepals and the cortical tissues of the stem, but not in the conducting bundles, the petals or the reproductive tissues.</text>
</comment>
<comment type="developmental stage">
    <text evidence="4">Not expressed at the embryo stage.</text>
</comment>
<comment type="similarity">
    <text evidence="5">Belongs to the oligopeptide OPT transporter (TC 2.A.67.1) family.</text>
</comment>
<sequence length="766" mass="86136">MEESEQVLPLLTNPKDLTNPSYASSSSSSSEPRDETEDLLLPISDENEEEEEENSPIRQVALTVPTTDDPSLPVLTFRMWVLGTLSCILLSFLNQFFWYRTEPLTISAISAQIAVVPLGRLMAAKITDRVFFQGSKWQFTLNPGPFNVKEHVLITIFANAGAGSVYAIHVVTVVKAFYMKNITFFVSFIVIVTTQVLGFGWAGIFRKYLVEPAAMWWPANLVQVSLFRALHEKEERTKGGLTRTQFFVIAFVCSFAYYVFPGYLFQIMTSLSWVCWFFPSSVMAQQIGSGLHGLGVGAIGLDWSTISSYLGSPLASPWFATANVGVGFVLVIYVLVPICYWLDVYKAKTFPIFSSSLFSSQGSKYNITSIIDSNFHLDLPAYERQGPLYLCTFFAISYGVGFAALSATIMHVALFHGREIWEQSKESFKEKKLDVHARLMQRYKQVPEWWFWCILVTNVGATIFACEYYNDQLQLPWWGVLLACTVAIIFTLPIGIITAITNQAPGLNIITEYIIGYIYPGYPVANMCFKVYGYISMQQAITFLQDFKLGHYMKIPPRTMFMAQIVGTLISCFVYLTTAWWLMETIPNICDSVTNSVWTCPSDKVFYDASVIWGLIGPRRIFGDLGLYKSVNWFFLVGAIAPILVWLASRMFPRQEWIKLINMPVLISATSSMPPATAVNYTTWVLAGFLSGFVVFRYRPNLWQRYNYVLSGALDAGLAFMGVLLYMCLGLENVSLDWWGNELDGCPLASCPTAPGIIVEGCPLYT</sequence>
<gene>
    <name type="primary">OPT7</name>
    <name type="ordered locus">At4g10770</name>
    <name type="ORF">T12H20.7</name>
</gene>
<accession>O82485</accession>
<proteinExistence type="evidence at transcript level"/>